<accession>P38365</accession>
<evidence type="ECO:0000256" key="1">
    <source>
        <dbReference type="SAM" id="MobiDB-lite"/>
    </source>
</evidence>
<evidence type="ECO:0000269" key="2">
    <source>
    </source>
</evidence>
<evidence type="ECO:0000269" key="3">
    <source>
    </source>
</evidence>
<evidence type="ECO:0000305" key="4"/>
<name>FTRV_SPIOL</name>
<dbReference type="EMBL" id="X78880">
    <property type="protein sequence ID" value="CAA55480.1"/>
    <property type="molecule type" value="mRNA"/>
</dbReference>
<dbReference type="EMBL" id="X77162">
    <property type="protein sequence ID" value="CAA54407.1"/>
    <property type="molecule type" value="mRNA"/>
</dbReference>
<dbReference type="EMBL" id="X77163">
    <property type="protein sequence ID" value="CAA54408.1"/>
    <property type="molecule type" value="mRNA"/>
</dbReference>
<dbReference type="PIR" id="S44200">
    <property type="entry name" value="RDSPTA"/>
</dbReference>
<dbReference type="SMR" id="P38365"/>
<dbReference type="iPTMnet" id="P38365"/>
<dbReference type="Proteomes" id="UP001155700">
    <property type="component" value="Unplaced"/>
</dbReference>
<dbReference type="GO" id="GO:0009507">
    <property type="term" value="C:chloroplast"/>
    <property type="evidence" value="ECO:0007669"/>
    <property type="project" value="UniProtKB-SubCell"/>
</dbReference>
<dbReference type="GO" id="GO:0016491">
    <property type="term" value="F:oxidoreductase activity"/>
    <property type="evidence" value="ECO:0007669"/>
    <property type="project" value="UniProtKB-KW"/>
</dbReference>
<dbReference type="GO" id="GO:0015979">
    <property type="term" value="P:photosynthesis"/>
    <property type="evidence" value="ECO:0007669"/>
    <property type="project" value="InterPro"/>
</dbReference>
<dbReference type="Gene3D" id="2.30.30.50">
    <property type="match status" value="1"/>
</dbReference>
<dbReference type="InterPro" id="IPR008990">
    <property type="entry name" value="Elect_transpt_acc-like_dom_sf"/>
</dbReference>
<dbReference type="InterPro" id="IPR004207">
    <property type="entry name" value="Fd_thioredoxin_Rdtase_alpha"/>
</dbReference>
<dbReference type="InterPro" id="IPR044166">
    <property type="entry name" value="FTRV"/>
</dbReference>
<dbReference type="PANTHER" id="PTHR46937:SF4">
    <property type="entry name" value="FERREDOXIN-THIOREDOXIN REDUCTASE SUBUNIT A1, CHLOROPLASTIC"/>
    <property type="match status" value="1"/>
</dbReference>
<dbReference type="PANTHER" id="PTHR46937">
    <property type="entry name" value="FERREDOXIN-THIOREDOXIN REDUCTASE, VARIABLE CHAIN"/>
    <property type="match status" value="1"/>
</dbReference>
<dbReference type="Pfam" id="PF02941">
    <property type="entry name" value="FeThRed_A"/>
    <property type="match status" value="1"/>
</dbReference>
<dbReference type="SUPFAM" id="SSF50090">
    <property type="entry name" value="Electron transport accessory proteins"/>
    <property type="match status" value="1"/>
</dbReference>
<comment type="function">
    <text>Variable subunit of the ferredoxin-thioredoxin reductase (FTR), which catalyzes the two-electron reduction of thioredoxins by the electrons provided by reduced ferredoxin.</text>
</comment>
<comment type="subunit">
    <text>Heterodimer of subunit A (variable subunit) and subunit B (catalytic subunit). Heterodimeric FTR forms a complex with ferredoxin and thioredoxin.</text>
</comment>
<comment type="subcellular location">
    <subcellularLocation>
        <location>Plastid</location>
        <location>Chloroplast</location>
    </subcellularLocation>
</comment>
<comment type="similarity">
    <text evidence="4">Belongs to the ferredoxin thioredoxin reductase alpha subunit family.</text>
</comment>
<keyword id="KW-0150">Chloroplast</keyword>
<keyword id="KW-0903">Direct protein sequencing</keyword>
<keyword id="KW-0560">Oxidoreductase</keyword>
<keyword id="KW-0597">Phosphoprotein</keyword>
<keyword id="KW-0934">Plastid</keyword>
<keyword id="KW-1185">Reference proteome</keyword>
<keyword id="KW-0809">Transit peptide</keyword>
<feature type="transit peptide" description="Chloroplast" evidence="2 3">
    <location>
        <begin position="1"/>
        <end position="62"/>
    </location>
</feature>
<feature type="chain" id="PRO_0000021290" description="Ferredoxin-thioredoxin reductase, variable chain, chloroplastic">
    <location>
        <begin position="63"/>
        <end position="174"/>
    </location>
</feature>
<feature type="region of interest" description="Disordered" evidence="1">
    <location>
        <begin position="69"/>
        <end position="89"/>
    </location>
</feature>
<feature type="compositionally biased region" description="Low complexity" evidence="1">
    <location>
        <begin position="69"/>
        <end position="81"/>
    </location>
</feature>
<feature type="modified residue" description="Phosphoserine" evidence="2 3">
    <location>
        <position position="70"/>
    </location>
</feature>
<feature type="modified residue" description="Phosphoserine" evidence="2 3">
    <location>
        <position position="71"/>
    </location>
</feature>
<feature type="sequence variant" description="In A2.">
    <original>A</original>
    <variation>E</variation>
    <location>
        <position position="56"/>
    </location>
</feature>
<feature type="sequence variant" description="In A2.">
    <original>S</original>
    <variation>SS</variation>
    <location>
        <position position="80"/>
    </location>
</feature>
<reference key="1">
    <citation type="submission" date="1994-04" db="EMBL/GenBank/DDBJ databases">
        <authorList>
            <person name="Gaymard E."/>
            <person name="Schuermann P."/>
        </authorList>
    </citation>
    <scope>NUCLEOTIDE SEQUENCE [MRNA]</scope>
</reference>
<reference key="2">
    <citation type="journal article" date="1994" name="Biochim. Biophys. Acta">
        <title>Full-length cDNA sequences for both ferredoxin-thioredoxin reductase subunits from spinach (Spinacia oleracea L.).</title>
        <authorList>
            <person name="Falkenstein E."/>
            <person name="von Schaewen A."/>
            <person name="Scheibe R."/>
        </authorList>
    </citation>
    <scope>NUCLEOTIDE SEQUENCE [MRNA]</scope>
    <source>
        <tissue>Green leaf</tissue>
    </source>
</reference>
<reference key="3">
    <citation type="journal article" date="1994" name="Eur. J. Biochem.">
        <title>Amino acid sequence of spinach ferredoxin:thioredoxin reductase variable subunit.</title>
        <authorList>
            <person name="Iwadate H."/>
            <person name="Yano K."/>
            <person name="Kamo M."/>
            <person name="Gardet-Salvi L."/>
            <person name="Schuermann P."/>
            <person name="Tsugita A."/>
        </authorList>
    </citation>
    <scope>PROTEIN SEQUENCE OF 63-174</scope>
    <source>
        <tissue>Leaf</tissue>
    </source>
</reference>
<reference key="4">
    <citation type="journal article" date="1991" name="Protein Seq. Data Anal.">
        <title>Characterization of spinach ferredoxin-thioredoxin reductase.</title>
        <authorList>
            <person name="Tsugita A."/>
            <person name="Yano K."/>
            <person name="Gardet-Salvi L."/>
            <person name="Schuermann P."/>
        </authorList>
    </citation>
    <scope>PROTEIN SEQUENCE OF N-TERMINUS</scope>
    <scope>PHOSPHORYLATION AT SER-70 AND SER-71</scope>
</reference>
<sequence length="174" mass="19075">MTTGVAVMSSATAASTATATAAATARIPLFLSRNNSSATVCSTLRCRTITRTRTRARLAICCEVALKSDSSTGFDSSSSSPPEEDEELKKNLEKVGCKVKVKSPLKVYHVPKLPEVELTPDMVGVIKQYVGFWKGKYISPNYPFKVEYRIDVPDRGSVKLVVHLKEEEFEIIAE</sequence>
<organism>
    <name type="scientific">Spinacia oleracea</name>
    <name type="common">Spinach</name>
    <dbReference type="NCBI Taxonomy" id="3562"/>
    <lineage>
        <taxon>Eukaryota</taxon>
        <taxon>Viridiplantae</taxon>
        <taxon>Streptophyta</taxon>
        <taxon>Embryophyta</taxon>
        <taxon>Tracheophyta</taxon>
        <taxon>Spermatophyta</taxon>
        <taxon>Magnoliopsida</taxon>
        <taxon>eudicotyledons</taxon>
        <taxon>Gunneridae</taxon>
        <taxon>Pentapetalae</taxon>
        <taxon>Caryophyllales</taxon>
        <taxon>Chenopodiaceae</taxon>
        <taxon>Chenopodioideae</taxon>
        <taxon>Anserineae</taxon>
        <taxon>Spinacia</taxon>
    </lineage>
</organism>
<gene>
    <name type="primary">FTRV</name>
</gene>
<protein>
    <recommendedName>
        <fullName>Ferredoxin-thioredoxin reductase, variable chain, chloroplastic</fullName>
        <shortName>FTR-V</shortName>
    </recommendedName>
    <alternativeName>
        <fullName>Ferredoxin-thioredoxin reductase subunit A</fullName>
        <shortName>FTR-A</shortName>
    </alternativeName>
</protein>
<proteinExistence type="evidence at protein level"/>